<reference key="1">
    <citation type="journal article" date="2007" name="Nature">
        <title>Evolution of genes and genomes on the Drosophila phylogeny.</title>
        <authorList>
            <consortium name="Drosophila 12 genomes consortium"/>
        </authorList>
    </citation>
    <scope>NUCLEOTIDE SEQUENCE [LARGE SCALE GENOMIC DNA]</scope>
    <source>
        <strain>Tucson 14021-0224.01</strain>
    </source>
</reference>
<reference key="2">
    <citation type="journal article" date="2001" name="Mol. Biol. Evol.">
        <title>Local changes in GC/AT substitution biases and in crossover frequencies on Drosophila chromosomes.</title>
        <authorList>
            <person name="Takano-Shimizu T."/>
        </authorList>
    </citation>
    <scope>NUCLEOTIDE SEQUENCE [GENOMIC DNA] OF 1-241</scope>
</reference>
<dbReference type="EMBL" id="CH954183">
    <property type="protein sequence ID" value="EDV45489.1"/>
    <property type="molecule type" value="Genomic_DNA"/>
</dbReference>
<dbReference type="EMBL" id="AB032438">
    <property type="protein sequence ID" value="BAB20388.1"/>
    <property type="molecule type" value="Genomic_DNA"/>
</dbReference>
<dbReference type="SMR" id="B3P9J3"/>
<dbReference type="EnsemblMetazoa" id="FBtr0132748">
    <property type="protein sequence ID" value="FBpp0131240"/>
    <property type="gene ID" value="FBgn0043705"/>
</dbReference>
<dbReference type="EnsemblMetazoa" id="XM_001982484.3">
    <property type="protein sequence ID" value="XP_001982520.1"/>
    <property type="gene ID" value="LOC6555636"/>
</dbReference>
<dbReference type="GeneID" id="6555636"/>
<dbReference type="KEGG" id="der:6555636"/>
<dbReference type="CTD" id="104044"/>
<dbReference type="eggNOG" id="KOG0830">
    <property type="taxonomic scope" value="Eukaryota"/>
</dbReference>
<dbReference type="HOGENOM" id="CLU_058171_1_0_1"/>
<dbReference type="OMA" id="VKNFFEP"/>
<dbReference type="OrthoDB" id="414863at2759"/>
<dbReference type="PhylomeDB" id="B3P9J3"/>
<dbReference type="ChiTaRS" id="sta">
    <property type="organism name" value="fly"/>
</dbReference>
<dbReference type="Proteomes" id="UP000008711">
    <property type="component" value="Unassembled WGS sequence"/>
</dbReference>
<dbReference type="GO" id="GO:0022627">
    <property type="term" value="C:cytosolic small ribosomal subunit"/>
    <property type="evidence" value="ECO:0007669"/>
    <property type="project" value="UniProtKB-UniRule"/>
</dbReference>
<dbReference type="GO" id="GO:0005634">
    <property type="term" value="C:nucleus"/>
    <property type="evidence" value="ECO:0007669"/>
    <property type="project" value="UniProtKB-SubCell"/>
</dbReference>
<dbReference type="GO" id="GO:0043022">
    <property type="term" value="F:ribosome binding"/>
    <property type="evidence" value="ECO:0007669"/>
    <property type="project" value="EnsemblMetazoa"/>
</dbReference>
<dbReference type="GO" id="GO:0003735">
    <property type="term" value="F:structural constituent of ribosome"/>
    <property type="evidence" value="ECO:0007669"/>
    <property type="project" value="UniProtKB-UniRule"/>
</dbReference>
<dbReference type="GO" id="GO:0000028">
    <property type="term" value="P:ribosomal small subunit assembly"/>
    <property type="evidence" value="ECO:0007669"/>
    <property type="project" value="UniProtKB-UniRule"/>
</dbReference>
<dbReference type="GO" id="GO:0006412">
    <property type="term" value="P:translation"/>
    <property type="evidence" value="ECO:0007669"/>
    <property type="project" value="UniProtKB-UniRule"/>
</dbReference>
<dbReference type="CDD" id="cd01425">
    <property type="entry name" value="RPS2"/>
    <property type="match status" value="1"/>
</dbReference>
<dbReference type="FunFam" id="3.40.50.10490:FF:000012">
    <property type="entry name" value="40S ribosomal protein SA"/>
    <property type="match status" value="1"/>
</dbReference>
<dbReference type="Gene3D" id="3.40.50.10490">
    <property type="entry name" value="Glucose-6-phosphate isomerase like protein, domain 1"/>
    <property type="match status" value="1"/>
</dbReference>
<dbReference type="HAMAP" id="MF_03015">
    <property type="entry name" value="Ribosomal_S2_euk"/>
    <property type="match status" value="1"/>
</dbReference>
<dbReference type="InterPro" id="IPR001865">
    <property type="entry name" value="Ribosomal_uS2"/>
</dbReference>
<dbReference type="InterPro" id="IPR032281">
    <property type="entry name" value="Ribosomal_uS2_C"/>
</dbReference>
<dbReference type="InterPro" id="IPR018130">
    <property type="entry name" value="Ribosomal_uS2_CS"/>
</dbReference>
<dbReference type="InterPro" id="IPR027498">
    <property type="entry name" value="Ribosomal_uS2_euk"/>
</dbReference>
<dbReference type="InterPro" id="IPR005707">
    <property type="entry name" value="Ribosomal_uS2_euk/arc"/>
</dbReference>
<dbReference type="InterPro" id="IPR023591">
    <property type="entry name" value="Ribosomal_uS2_flav_dom_sf"/>
</dbReference>
<dbReference type="NCBIfam" id="TIGR01012">
    <property type="entry name" value="uS2_euk_arch"/>
    <property type="match status" value="1"/>
</dbReference>
<dbReference type="PANTHER" id="PTHR11489">
    <property type="entry name" value="40S RIBOSOMAL PROTEIN SA"/>
    <property type="match status" value="1"/>
</dbReference>
<dbReference type="Pfam" id="PF16122">
    <property type="entry name" value="40S_SA_C"/>
    <property type="match status" value="1"/>
</dbReference>
<dbReference type="Pfam" id="PF00318">
    <property type="entry name" value="Ribosomal_S2"/>
    <property type="match status" value="2"/>
</dbReference>
<dbReference type="PRINTS" id="PR00395">
    <property type="entry name" value="RIBOSOMALS2"/>
</dbReference>
<dbReference type="SUPFAM" id="SSF52313">
    <property type="entry name" value="Ribosomal protein S2"/>
    <property type="match status" value="1"/>
</dbReference>
<dbReference type="PROSITE" id="PS00962">
    <property type="entry name" value="RIBOSOMAL_S2_1"/>
    <property type="match status" value="1"/>
</dbReference>
<dbReference type="PROSITE" id="PS00963">
    <property type="entry name" value="RIBOSOMAL_S2_2"/>
    <property type="match status" value="1"/>
</dbReference>
<comment type="function">
    <text evidence="1">Required for the assembly and/or stability of the 40S ribosomal subunit. Required for the processing of the 20S rRNA-precursor to mature 18S rRNA in a late step of the maturation of 40S ribosomal subunits. Required during oogenesis and imaginal development.</text>
</comment>
<comment type="subunit">
    <text evidence="1">Component of the small ribosomal subunit. Mature ribosomes consist of a small (40S) and a large (60S) subunit. The 40S subunit contains about 33 different proteins and 1 molecule of RNA (18S). The 60S subunit contains about 49 different proteins and 3 molecules of RNA (28S, 5.8S and 5S). Interacts with oho23B/rpS21.</text>
</comment>
<comment type="subcellular location">
    <subcellularLocation>
        <location evidence="1">Cytoplasm</location>
    </subcellularLocation>
    <subcellularLocation>
        <location evidence="1">Nucleus</location>
    </subcellularLocation>
    <text evidence="1">May associate with nascent RNP complexes within the nucleus.</text>
</comment>
<comment type="similarity">
    <text evidence="1">Belongs to the universal ribosomal protein uS2 family.</text>
</comment>
<sequence>MSGGLDILSLKEDDITKMLVATTHLGSENVNFQMEQYVYKRRADGVNILNLGKTWEKLQLAARAIVAIDNPSDIFVISSRPIGQRAVLKFAKYTDTTPIAGRFTPGAFTNQIQPAFREPRLLVVTDPNTDHQPIMEASYVNIPVIAFTNTDSPLRYIDIAIPCNNKSAHSIGLMWWLLAREVLRLRGTISRSVEWPVVVDLFFYRDPEEAEKEEAAAKELLPAPKIEEAVDHPVEETTNWADEVAAETVGGVEDWNEDTVKTSWGSDGQF</sequence>
<feature type="initiator methionine" description="Removed" evidence="1">
    <location>
        <position position="1"/>
    </location>
</feature>
<feature type="chain" id="PRO_0000371581" description="Small ribosomal subunit protein uS2">
    <location>
        <begin position="2"/>
        <end position="270"/>
    </location>
</feature>
<feature type="region of interest" description="Disordered" evidence="2">
    <location>
        <begin position="251"/>
        <end position="270"/>
    </location>
</feature>
<feature type="compositionally biased region" description="Polar residues" evidence="2">
    <location>
        <begin position="261"/>
        <end position="270"/>
    </location>
</feature>
<accession>B3P9J3</accession>
<accession>Q9GRE4</accession>
<organism>
    <name type="scientific">Drosophila erecta</name>
    <name type="common">Fruit fly</name>
    <dbReference type="NCBI Taxonomy" id="7220"/>
    <lineage>
        <taxon>Eukaryota</taxon>
        <taxon>Metazoa</taxon>
        <taxon>Ecdysozoa</taxon>
        <taxon>Arthropoda</taxon>
        <taxon>Hexapoda</taxon>
        <taxon>Insecta</taxon>
        <taxon>Pterygota</taxon>
        <taxon>Neoptera</taxon>
        <taxon>Endopterygota</taxon>
        <taxon>Diptera</taxon>
        <taxon>Brachycera</taxon>
        <taxon>Muscomorpha</taxon>
        <taxon>Ephydroidea</taxon>
        <taxon>Drosophilidae</taxon>
        <taxon>Drosophila</taxon>
        <taxon>Sophophora</taxon>
    </lineage>
</organism>
<protein>
    <recommendedName>
        <fullName evidence="1">Small ribosomal subunit protein uS2</fullName>
    </recommendedName>
    <alternativeName>
        <fullName evidence="3">40S ribosomal protein SA</fullName>
    </alternativeName>
    <alternativeName>
        <fullName evidence="1">Protein stubarista</fullName>
    </alternativeName>
</protein>
<gene>
    <name evidence="1" type="primary">sta</name>
    <name type="ORF">GG12694</name>
</gene>
<evidence type="ECO:0000255" key="1">
    <source>
        <dbReference type="HAMAP-Rule" id="MF_03015"/>
    </source>
</evidence>
<evidence type="ECO:0000256" key="2">
    <source>
        <dbReference type="SAM" id="MobiDB-lite"/>
    </source>
</evidence>
<evidence type="ECO:0000305" key="3"/>
<proteinExistence type="inferred from homology"/>
<name>RSSA_DROER</name>
<keyword id="KW-0963">Cytoplasm</keyword>
<keyword id="KW-0217">Developmental protein</keyword>
<keyword id="KW-0539">Nucleus</keyword>
<keyword id="KW-0687">Ribonucleoprotein</keyword>
<keyword id="KW-0689">Ribosomal protein</keyword>